<dbReference type="EC" id="2.3.1.268"/>
<dbReference type="EC" id="3.1.2.1"/>
<dbReference type="EC" id="3.1.1.-"/>
<dbReference type="EMBL" id="CAIF01000179">
    <property type="protein sequence ID" value="CCH45056.1"/>
    <property type="molecule type" value="Genomic_DNA"/>
</dbReference>
<dbReference type="SMR" id="K0KPV8"/>
<dbReference type="STRING" id="1206466.K0KPV8"/>
<dbReference type="ESTHER" id="wiccf-k0kpv8">
    <property type="family name" value="ABHD11-Acetyl_transferase"/>
</dbReference>
<dbReference type="eggNOG" id="KOG2382">
    <property type="taxonomic scope" value="Eukaryota"/>
</dbReference>
<dbReference type="HOGENOM" id="CLU_020336_53_0_1"/>
<dbReference type="InParanoid" id="K0KPV8"/>
<dbReference type="Proteomes" id="UP000009328">
    <property type="component" value="Unassembled WGS sequence"/>
</dbReference>
<dbReference type="GO" id="GO:0005739">
    <property type="term" value="C:mitochondrion"/>
    <property type="evidence" value="ECO:0007669"/>
    <property type="project" value="UniProtKB-SubCell"/>
</dbReference>
<dbReference type="GO" id="GO:0003986">
    <property type="term" value="F:acetyl-CoA hydrolase activity"/>
    <property type="evidence" value="ECO:0007669"/>
    <property type="project" value="UniProtKB-EC"/>
</dbReference>
<dbReference type="GO" id="GO:0052689">
    <property type="term" value="F:carboxylic ester hydrolase activity"/>
    <property type="evidence" value="ECO:0007669"/>
    <property type="project" value="TreeGrafter"/>
</dbReference>
<dbReference type="GO" id="GO:0016740">
    <property type="term" value="F:transferase activity"/>
    <property type="evidence" value="ECO:0007669"/>
    <property type="project" value="UniProtKB-KW"/>
</dbReference>
<dbReference type="Gene3D" id="3.40.50.1820">
    <property type="entry name" value="alpha/beta hydrolase"/>
    <property type="match status" value="1"/>
</dbReference>
<dbReference type="InterPro" id="IPR000073">
    <property type="entry name" value="AB_hydrolase_1"/>
</dbReference>
<dbReference type="InterPro" id="IPR029058">
    <property type="entry name" value="AB_hydrolase_fold"/>
</dbReference>
<dbReference type="PANTHER" id="PTHR46118">
    <property type="entry name" value="PROTEIN ABHD11"/>
    <property type="match status" value="1"/>
</dbReference>
<dbReference type="PANTHER" id="PTHR46118:SF4">
    <property type="entry name" value="PROTEIN ABHD11"/>
    <property type="match status" value="1"/>
</dbReference>
<dbReference type="Pfam" id="PF00561">
    <property type="entry name" value="Abhydrolase_1"/>
    <property type="match status" value="1"/>
</dbReference>
<dbReference type="SUPFAM" id="SSF53474">
    <property type="entry name" value="alpha/beta-Hydrolases"/>
    <property type="match status" value="1"/>
</dbReference>
<gene>
    <name type="primary">EAT1</name>
    <name type="ORF">BN7_4634</name>
</gene>
<feature type="transit peptide" description="Mitochondrion" evidence="2">
    <location>
        <begin position="1"/>
        <end position="25"/>
    </location>
</feature>
<feature type="chain" id="PRO_0000446184" description="Ethanol acetyltransferase 1">
    <location>
        <begin position="26"/>
        <end position="393"/>
    </location>
</feature>
<feature type="domain" description="AB hydrolase-1" evidence="2">
    <location>
        <begin position="49"/>
        <end position="151"/>
    </location>
</feature>
<feature type="region of interest" description="Disordered" evidence="3">
    <location>
        <begin position="343"/>
        <end position="393"/>
    </location>
</feature>
<feature type="compositionally biased region" description="Basic and acidic residues" evidence="3">
    <location>
        <begin position="343"/>
        <end position="354"/>
    </location>
</feature>
<feature type="compositionally biased region" description="Polar residues" evidence="3">
    <location>
        <begin position="355"/>
        <end position="375"/>
    </location>
</feature>
<feature type="compositionally biased region" description="Basic and acidic residues" evidence="3">
    <location>
        <begin position="379"/>
        <end position="393"/>
    </location>
</feature>
<feature type="active site" description="Charge relay system" evidence="1">
    <location>
        <position position="122"/>
    </location>
</feature>
<feature type="active site" description="Charge relay system" evidence="1">
    <location>
        <position position="146"/>
    </location>
</feature>
<feature type="active site" description="Charge relay system" evidence="1">
    <location>
        <position position="296"/>
    </location>
</feature>
<accession>K0KPV8</accession>
<evidence type="ECO:0000250" key="1">
    <source>
        <dbReference type="UniProtKB" id="A0A1E3P8S6"/>
    </source>
</evidence>
<evidence type="ECO:0000255" key="2"/>
<evidence type="ECO:0000256" key="3">
    <source>
        <dbReference type="SAM" id="MobiDB-lite"/>
    </source>
</evidence>
<evidence type="ECO:0000269" key="4">
    <source>
    </source>
</evidence>
<evidence type="ECO:0000305" key="5"/>
<reference key="1">
    <citation type="journal article" date="2012" name="Eukaryot. Cell">
        <title>Draft genome sequence of Wickerhamomyces ciferrii NRRL Y-1031 F-60-10.</title>
        <authorList>
            <person name="Schneider J."/>
            <person name="Andrea H."/>
            <person name="Blom J."/>
            <person name="Jaenicke S."/>
            <person name="Rueckert C."/>
            <person name="Schorsch C."/>
            <person name="Szczepanowski R."/>
            <person name="Farwick M."/>
            <person name="Goesmann A."/>
            <person name="Puehler A."/>
            <person name="Schaffer S."/>
            <person name="Tauch A."/>
            <person name="Koehler T."/>
            <person name="Brinkrolf K."/>
        </authorList>
    </citation>
    <scope>NUCLEOTIDE SEQUENCE [LARGE SCALE GENOMIC DNA]</scope>
    <source>
        <strain>ATCC 14091 / BCRC 22168 / CBS 111 / JCM 3599 / NBRC 0793 / NRRL Y-1031 F-60-10</strain>
    </source>
</reference>
<reference key="2">
    <citation type="journal article" date="2017" name="Metab. Eng.">
        <title>Ethyl acetate production by the elusive alcohol acetyltransferase from yeast.</title>
        <authorList>
            <person name="Kruis A.J."/>
            <person name="Levisson M."/>
            <person name="Mars A.E."/>
            <person name="van der Ploeg M."/>
            <person name="Garces Daza F."/>
            <person name="Ellena V."/>
            <person name="Kengen S.W.M."/>
            <person name="van der Oost J."/>
            <person name="Weusthuis R.A."/>
        </authorList>
    </citation>
    <scope>FUNCTION</scope>
    <scope>CATALYTIC ACTIVITY</scope>
    <source>
        <strain>ATCC 14091 / BCRC 22168 / CBS 111 / JCM 3599 / NBRC 0793 / NRRL Y-1031 F-60-10</strain>
    </source>
</reference>
<keyword id="KW-0378">Hydrolase</keyword>
<keyword id="KW-0496">Mitochondrion</keyword>
<keyword id="KW-1185">Reference proteome</keyword>
<keyword id="KW-0808">Transferase</keyword>
<keyword id="KW-0809">Transit peptide</keyword>
<sequence>MHFTRTLFNQVASKASRQLPVQKRVQMAYDLHIPNKTVNPNLNIRSHEPIVFVHGIFGSKKNYRFDCQKIANVTHTPVYTVDLRNHGQSIHALPFDYETLAQDVADFCEDHGLKKVNLIGYSLGAKICMLTMLQNPDLIRSGVIIDNSPIEQPHIEIFLQMFVKSMIHVLNSTKIEANDSDWKRKADDAMKRYIPDGGIRKYLLANLINKVPKGYKSPVIDYDDGFIHFQNPVKHMTEVAVKNVSAWPTEKVAGKTFEGPIRFIKGTKSAFIDDAGKKAIAGYFPNHSISEINATHFILNERPLEYVRVICDFIKTERFRSLQEHLRNVEHFSPSEIEAKQAAKHAQQIEELRKVTSTSESSIPHSTQSSEQAFTENIDLARQEREHQKSVSA</sequence>
<comment type="function">
    <text evidence="1 4">Alcohol acetyltransferase that catalyzes the synthesis of ethyl acetate from ethanol and acetyl-CoA (PubMed:28356220). Can also function as a thioesterase by hydrolyzing acetyl-CoA in the absence of ethanol, as well as esterase hydrolyzing ethyl acetate (By similarity).</text>
</comment>
<comment type="catalytic activity">
    <reaction evidence="4">
        <text>ethanol + acetyl-CoA = ethyl acetate + CoA</text>
        <dbReference type="Rhea" id="RHEA:55972"/>
        <dbReference type="ChEBI" id="CHEBI:16236"/>
        <dbReference type="ChEBI" id="CHEBI:27750"/>
        <dbReference type="ChEBI" id="CHEBI:57287"/>
        <dbReference type="ChEBI" id="CHEBI:57288"/>
        <dbReference type="EC" id="2.3.1.268"/>
    </reaction>
</comment>
<comment type="catalytic activity">
    <reaction evidence="1">
        <text>acetyl-CoA + H2O = acetate + CoA + H(+)</text>
        <dbReference type="Rhea" id="RHEA:20289"/>
        <dbReference type="ChEBI" id="CHEBI:15377"/>
        <dbReference type="ChEBI" id="CHEBI:15378"/>
        <dbReference type="ChEBI" id="CHEBI:30089"/>
        <dbReference type="ChEBI" id="CHEBI:57287"/>
        <dbReference type="ChEBI" id="CHEBI:57288"/>
        <dbReference type="EC" id="3.1.2.1"/>
    </reaction>
</comment>
<comment type="catalytic activity">
    <reaction evidence="1">
        <text>ethyl acetate + H2O = ethanol + acetate + H(+)</text>
        <dbReference type="Rhea" id="RHEA:58148"/>
        <dbReference type="ChEBI" id="CHEBI:15377"/>
        <dbReference type="ChEBI" id="CHEBI:15378"/>
        <dbReference type="ChEBI" id="CHEBI:16236"/>
        <dbReference type="ChEBI" id="CHEBI:27750"/>
        <dbReference type="ChEBI" id="CHEBI:30089"/>
    </reaction>
</comment>
<comment type="subcellular location">
    <subcellularLocation>
        <location evidence="1">Mitochondrion</location>
    </subcellularLocation>
</comment>
<comment type="similarity">
    <text evidence="5">Belongs to the AB hydrolase superfamily.</text>
</comment>
<organism>
    <name type="scientific">Wickerhamomyces ciferrii (strain ATCC 14091 / BCRC 22168 / CBS 111 / JCM 3599 / NBRC 0793 / NRRL Y-1031 F-60-10)</name>
    <name type="common">Yeast</name>
    <name type="synonym">Pichia ciferrii</name>
    <dbReference type="NCBI Taxonomy" id="1206466"/>
    <lineage>
        <taxon>Eukaryota</taxon>
        <taxon>Fungi</taxon>
        <taxon>Dikarya</taxon>
        <taxon>Ascomycota</taxon>
        <taxon>Saccharomycotina</taxon>
        <taxon>Saccharomycetes</taxon>
        <taxon>Phaffomycetales</taxon>
        <taxon>Wickerhamomycetaceae</taxon>
        <taxon>Wickerhamomyces</taxon>
    </lineage>
</organism>
<proteinExistence type="evidence at protein level"/>
<name>EAT1_WICCF</name>
<protein>
    <recommendedName>
        <fullName>Ethanol acetyltransferase 1</fullName>
        <ecNumber>2.3.1.268</ecNumber>
    </recommendedName>
    <alternativeName>
        <fullName>Acetyl-CoA hydrolase</fullName>
        <ecNumber>3.1.2.1</ecNumber>
    </alternativeName>
    <alternativeName>
        <fullName>Acetyl-CoA thioesterase</fullName>
    </alternativeName>
    <alternativeName>
        <fullName>Alcohol acetyltransferase</fullName>
        <shortName>AAT</shortName>
    </alternativeName>
    <alternativeName>
        <fullName>Ethyl acetate esterase</fullName>
        <ecNumber>3.1.1.-</ecNumber>
    </alternativeName>
</protein>